<dbReference type="EC" id="2.6.1.16"/>
<dbReference type="EMBL" id="AL590447">
    <property type="protein sequence ID" value="CAD25661.1"/>
    <property type="molecule type" value="Genomic_DNA"/>
</dbReference>
<dbReference type="RefSeq" id="NP_586057.1">
    <property type="nucleotide sequence ID" value="NM_001041679.1"/>
</dbReference>
<dbReference type="SMR" id="Q8SRI2"/>
<dbReference type="FunCoup" id="Q8SRI2">
    <property type="interactions" value="41"/>
</dbReference>
<dbReference type="STRING" id="284813.Q8SRI2"/>
<dbReference type="GeneID" id="859487"/>
<dbReference type="KEGG" id="ecu:ECU07_1280"/>
<dbReference type="VEuPathDB" id="MicrosporidiaDB:ECU07_1280"/>
<dbReference type="HOGENOM" id="CLU_012520_5_2_1"/>
<dbReference type="InParanoid" id="Q8SRI2"/>
<dbReference type="OMA" id="ASEYRYA"/>
<dbReference type="OrthoDB" id="15235at2759"/>
<dbReference type="UniPathway" id="UPA00113">
    <property type="reaction ID" value="UER00528"/>
</dbReference>
<dbReference type="Proteomes" id="UP000000819">
    <property type="component" value="Chromosome VII"/>
</dbReference>
<dbReference type="GO" id="GO:0097367">
    <property type="term" value="F:carbohydrate derivative binding"/>
    <property type="evidence" value="ECO:0007669"/>
    <property type="project" value="InterPro"/>
</dbReference>
<dbReference type="GO" id="GO:0004360">
    <property type="term" value="F:glutamine-fructose-6-phosphate transaminase (isomerizing) activity"/>
    <property type="evidence" value="ECO:0007669"/>
    <property type="project" value="UniProtKB-EC"/>
</dbReference>
<dbReference type="GO" id="GO:0006002">
    <property type="term" value="P:fructose 6-phosphate metabolic process"/>
    <property type="evidence" value="ECO:0007669"/>
    <property type="project" value="TreeGrafter"/>
</dbReference>
<dbReference type="GO" id="GO:0006487">
    <property type="term" value="P:protein N-linked glycosylation"/>
    <property type="evidence" value="ECO:0007669"/>
    <property type="project" value="TreeGrafter"/>
</dbReference>
<dbReference type="GO" id="GO:0006048">
    <property type="term" value="P:UDP-N-acetylglucosamine biosynthetic process"/>
    <property type="evidence" value="ECO:0007669"/>
    <property type="project" value="UniProtKB-UniPathway"/>
</dbReference>
<dbReference type="CDD" id="cd00714">
    <property type="entry name" value="GFAT"/>
    <property type="match status" value="1"/>
</dbReference>
<dbReference type="CDD" id="cd05008">
    <property type="entry name" value="SIS_GlmS_GlmD_1"/>
    <property type="match status" value="1"/>
</dbReference>
<dbReference type="CDD" id="cd05009">
    <property type="entry name" value="SIS_GlmS_GlmD_2"/>
    <property type="match status" value="1"/>
</dbReference>
<dbReference type="FunFam" id="3.40.50.10490:FF:000001">
    <property type="entry name" value="Glutamine--fructose-6-phosphate aminotransferase [isomerizing]"/>
    <property type="match status" value="1"/>
</dbReference>
<dbReference type="FunFam" id="3.60.20.10:FF:000052">
    <property type="entry name" value="Glutamine--fructose-6-phosphate aminotransferase [isomerizing] 2"/>
    <property type="match status" value="1"/>
</dbReference>
<dbReference type="Gene3D" id="3.40.50.10490">
    <property type="entry name" value="Glucose-6-phosphate isomerase like protein, domain 1"/>
    <property type="match status" value="2"/>
</dbReference>
<dbReference type="Gene3D" id="3.60.20.10">
    <property type="entry name" value="Glutamine Phosphoribosylpyrophosphate, subunit 1, domain 1"/>
    <property type="match status" value="1"/>
</dbReference>
<dbReference type="InterPro" id="IPR017932">
    <property type="entry name" value="GATase_2_dom"/>
</dbReference>
<dbReference type="InterPro" id="IPR005855">
    <property type="entry name" value="GFAT"/>
</dbReference>
<dbReference type="InterPro" id="IPR047084">
    <property type="entry name" value="GFAT_N"/>
</dbReference>
<dbReference type="InterPro" id="IPR035466">
    <property type="entry name" value="GlmS/AgaS_SIS"/>
</dbReference>
<dbReference type="InterPro" id="IPR035490">
    <property type="entry name" value="GlmS/FrlB_SIS"/>
</dbReference>
<dbReference type="InterPro" id="IPR029055">
    <property type="entry name" value="Ntn_hydrolases_N"/>
</dbReference>
<dbReference type="InterPro" id="IPR001347">
    <property type="entry name" value="SIS_dom"/>
</dbReference>
<dbReference type="InterPro" id="IPR046348">
    <property type="entry name" value="SIS_dom_sf"/>
</dbReference>
<dbReference type="NCBIfam" id="TIGR01135">
    <property type="entry name" value="glmS"/>
    <property type="match status" value="1"/>
</dbReference>
<dbReference type="NCBIfam" id="NF001484">
    <property type="entry name" value="PRK00331.1"/>
    <property type="match status" value="1"/>
</dbReference>
<dbReference type="PANTHER" id="PTHR10937">
    <property type="entry name" value="GLUCOSAMINE--FRUCTOSE-6-PHOSPHATE AMINOTRANSFERASE, ISOMERIZING"/>
    <property type="match status" value="1"/>
</dbReference>
<dbReference type="PANTHER" id="PTHR10937:SF0">
    <property type="entry name" value="GLUTAMINE--FRUCTOSE-6-PHOSPHATE TRANSAMINASE (ISOMERIZING)"/>
    <property type="match status" value="1"/>
</dbReference>
<dbReference type="Pfam" id="PF13522">
    <property type="entry name" value="GATase_6"/>
    <property type="match status" value="1"/>
</dbReference>
<dbReference type="Pfam" id="PF01380">
    <property type="entry name" value="SIS"/>
    <property type="match status" value="2"/>
</dbReference>
<dbReference type="SUPFAM" id="SSF56235">
    <property type="entry name" value="N-terminal nucleophile aminohydrolases (Ntn hydrolases)"/>
    <property type="match status" value="1"/>
</dbReference>
<dbReference type="SUPFAM" id="SSF53697">
    <property type="entry name" value="SIS domain"/>
    <property type="match status" value="1"/>
</dbReference>
<dbReference type="PROSITE" id="PS51278">
    <property type="entry name" value="GATASE_TYPE_2"/>
    <property type="match status" value="1"/>
</dbReference>
<dbReference type="PROSITE" id="PS51464">
    <property type="entry name" value="SIS"/>
    <property type="match status" value="2"/>
</dbReference>
<name>GFA1_ENCCU</name>
<accession>Q8SRI2</accession>
<organism>
    <name type="scientific">Encephalitozoon cuniculi (strain GB-M1)</name>
    <name type="common">Microsporidian parasite</name>
    <dbReference type="NCBI Taxonomy" id="284813"/>
    <lineage>
        <taxon>Eukaryota</taxon>
        <taxon>Fungi</taxon>
        <taxon>Fungi incertae sedis</taxon>
        <taxon>Microsporidia</taxon>
        <taxon>Unikaryonidae</taxon>
        <taxon>Encephalitozoon</taxon>
    </lineage>
</organism>
<gene>
    <name type="primary">GFA1</name>
    <name type="ordered locus">ECU07_1280</name>
</gene>
<proteinExistence type="evidence at protein level"/>
<sequence>MCGIFGYANFSKERSKDEIANIMINGLKRIEYRGYDSAGFCITDNTDRNFARIRAVGKVNSLYEIKNSQTSVDLTRKVLNHVSIAHTRWATHGQPSIENSHPLSSDENNSFLVVHNGIITNYKDLKVYLKKKGFTFESDTDTECAAKLALYFYREMERKKEETDFVAIVKNVVKHCEGAFAFVFASSLFPNELVTVRKSSPVLIGLKPSGKMSFDFFGVNYGDPADDTPTSLLDSPLAFSKSDRHGFDQNIDMMTRDVQDCTLHAHNKEPLEVFVASDASALIEHTRKVIFLEDNDIVHISNGNISIHRMHSKAKESGPEIREVKTIETELAAIMKGNYDHYMIKEINEQEESVVNTMRGRINFESLTVSLGGLKDHVSGIRKSQRIIFVACGTSYHASLANRALLEELLEIPVSVEIASDFLDRAPPIMRSDCVFFVSQSGETADSVMALRYCMSMGALCVGITNTVGSTISRETACGVHINAGPEIGVASTKAYTSQYIALVLVALQLSDQNLVKQARRREIMEGLKNISSQINRVLELSTSVKSLANGPMKDDASLLLIGRGYQYPTCMEGALKIKEITYIHAEGLAAGELKHGPIALVDDKLRIIFIATKDLLYDKTRNAMEQIFARGGRPIVICTEDISGDYAEYDTFVVPKTVDCLQGILTVIPLQLLSYHLAVAKGYNADFPRNLAKSVTVE</sequence>
<keyword id="KW-0032">Aminotransferase</keyword>
<keyword id="KW-0315">Glutamine amidotransferase</keyword>
<keyword id="KW-1185">Reference proteome</keyword>
<keyword id="KW-0677">Repeat</keyword>
<keyword id="KW-0808">Transferase</keyword>
<feature type="initiator methionine" description="Removed" evidence="1">
    <location>
        <position position="1"/>
    </location>
</feature>
<feature type="chain" id="PRO_0000381745" description="Glutamine--fructose-6-phosphate aminotransferase [isomerizing]">
    <location>
        <begin position="2"/>
        <end position="699"/>
    </location>
</feature>
<feature type="domain" description="Glutamine amidotransferase type-2" evidence="2">
    <location>
        <begin position="2"/>
        <end position="303"/>
    </location>
</feature>
<feature type="domain" description="SIS 1" evidence="3">
    <location>
        <begin position="377"/>
        <end position="516"/>
    </location>
</feature>
<feature type="domain" description="SIS 2" evidence="3">
    <location>
        <begin position="544"/>
        <end position="689"/>
    </location>
</feature>
<feature type="active site" description="Nucleophile" evidence="2">
    <location>
        <position position="2"/>
    </location>
</feature>
<protein>
    <recommendedName>
        <fullName>Glutamine--fructose-6-phosphate aminotransferase [isomerizing]</fullName>
        <shortName>GFAT</shortName>
        <ecNumber>2.6.1.16</ecNumber>
    </recommendedName>
    <alternativeName>
        <fullName>D-fructose-6-phosphate amidotransferase</fullName>
    </alternativeName>
    <alternativeName>
        <fullName>Hexosephosphate aminotransferase</fullName>
    </alternativeName>
</protein>
<comment type="function">
    <text evidence="1">Involved in amino sugar synthesis (formation of chitin, supplies the amino sugars of asparagine-linked oligosaccharides of glycoproteins).</text>
</comment>
<comment type="catalytic activity">
    <reaction>
        <text>D-fructose 6-phosphate + L-glutamine = D-glucosamine 6-phosphate + L-glutamate</text>
        <dbReference type="Rhea" id="RHEA:13237"/>
        <dbReference type="ChEBI" id="CHEBI:29985"/>
        <dbReference type="ChEBI" id="CHEBI:58359"/>
        <dbReference type="ChEBI" id="CHEBI:58725"/>
        <dbReference type="ChEBI" id="CHEBI:61527"/>
        <dbReference type="EC" id="2.6.1.16"/>
    </reaction>
</comment>
<comment type="pathway">
    <text>Nucleotide-sugar biosynthesis; UDP-N-acetyl-alpha-D-glucosamine biosynthesis; alpha-D-glucosamine 6-phosphate from D-fructose 6-phosphate: step 1/1.</text>
</comment>
<comment type="developmental stage">
    <text evidence="4">Expressed in late sporogonial stages.</text>
</comment>
<evidence type="ECO:0000250" key="1"/>
<evidence type="ECO:0000255" key="2">
    <source>
        <dbReference type="PROSITE-ProRule" id="PRU00609"/>
    </source>
</evidence>
<evidence type="ECO:0000255" key="3">
    <source>
        <dbReference type="PROSITE-ProRule" id="PRU00797"/>
    </source>
</evidence>
<evidence type="ECO:0000269" key="4">
    <source>
    </source>
</evidence>
<reference key="1">
    <citation type="journal article" date="2001" name="Nature">
        <title>Genome sequence and gene compaction of the eukaryote parasite Encephalitozoon cuniculi.</title>
        <authorList>
            <person name="Katinka M.D."/>
            <person name="Duprat S."/>
            <person name="Cornillot E."/>
            <person name="Metenier G."/>
            <person name="Thomarat F."/>
            <person name="Prensier G."/>
            <person name="Barbe V."/>
            <person name="Peyretaillade E."/>
            <person name="Brottier P."/>
            <person name="Wincker P."/>
            <person name="Delbac F."/>
            <person name="El Alaoui H."/>
            <person name="Peyret P."/>
            <person name="Saurin W."/>
            <person name="Gouy M."/>
            <person name="Weissenbach J."/>
            <person name="Vivares C.P."/>
        </authorList>
    </citation>
    <scope>NUCLEOTIDE SEQUENCE [LARGE SCALE GENOMIC DNA]</scope>
    <source>
        <strain>GB-M1</strain>
    </source>
</reference>
<reference key="2">
    <citation type="journal article" date="2006" name="Proteomics">
        <title>Proteomic analysis of the eukaryotic parasite Encephalitozoon cuniculi (microsporidia): a reference map for proteins expressed in late sporogonial stages.</title>
        <authorList>
            <person name="Brosson D."/>
            <person name="Kuhn L."/>
            <person name="Delbac F."/>
            <person name="Garin J."/>
            <person name="Vivares C.P."/>
            <person name="Texier C."/>
        </authorList>
    </citation>
    <scope>IDENTIFICATION BY MASS SPECTROMETRY [LARGE SCALE ANALYSIS]</scope>
    <scope>DEVELOPMENTAL STAGE</scope>
</reference>